<protein>
    <recommendedName>
        <fullName>CRISPR system associated protein Cas8</fullName>
    </recommendedName>
</protein>
<dbReference type="EMBL" id="FN869859">
    <property type="protein sequence ID" value="CCC81890.1"/>
    <property type="molecule type" value="Genomic_DNA"/>
</dbReference>
<dbReference type="RefSeq" id="WP_014127145.1">
    <property type="nucleotide sequence ID" value="NC_016070.1"/>
</dbReference>
<dbReference type="STRING" id="768679.TTX_1255"/>
<dbReference type="PaxDb" id="768679-TTX_1255"/>
<dbReference type="GeneID" id="11262135"/>
<dbReference type="KEGG" id="ttn:TTX_1255"/>
<dbReference type="PATRIC" id="fig|768679.9.peg.1268"/>
<dbReference type="eggNOG" id="arCOG01441">
    <property type="taxonomic scope" value="Archaea"/>
</dbReference>
<dbReference type="HOGENOM" id="CLU_751430_0_0_2"/>
<dbReference type="OrthoDB" id="25826at2157"/>
<dbReference type="Proteomes" id="UP000002654">
    <property type="component" value="Chromosome"/>
</dbReference>
<dbReference type="GO" id="GO:0051607">
    <property type="term" value="P:defense response to virus"/>
    <property type="evidence" value="ECO:0007669"/>
    <property type="project" value="UniProtKB-KW"/>
</dbReference>
<dbReference type="InterPro" id="IPR010184">
    <property type="entry name" value="CRISPR-assoc_prot_MJ0385"/>
</dbReference>
<dbReference type="Pfam" id="PF09703">
    <property type="entry name" value="Cas_Csa4"/>
    <property type="match status" value="1"/>
</dbReference>
<comment type="function">
    <text evidence="1">CRISPR (clustered regularly interspaced short palindromic repeat) is an adaptive immune system that provides protection against mobile genetic elements (viruses, transposable elements and conjugative plasmids). CRISPR clusters contain sequences complementary to antecedent mobile elements and target invading nucleic acids. CRISPR clusters are transcribed and processed into CRISPR RNA (crRNA) (By similarity).</text>
</comment>
<comment type="subunit">
    <text evidence="1 2">Monomer (By similarity). Can form a Cascade complex with Csa5, Cas7, Cas5a, Cas3 and Cas3'.</text>
</comment>
<comment type="induction">
    <text evidence="2">Repressed by 5 J/m2 ultraviolet light and 50 mM NaCl, slightly induced by 20 J/m2 ultraviolet light, 100 and 150 mM Nacl. Member of the csa5-cas7-cas5a-cas3-cas3'-cas8a2 operon.</text>
</comment>
<gene>
    <name type="primary">cas8a2</name>
    <name type="ordered locus">TTX_1255</name>
</gene>
<keyword id="KW-0051">Antiviral defense</keyword>
<keyword id="KW-1185">Reference proteome</keyword>
<evidence type="ECO:0000250" key="1"/>
<evidence type="ECO:0000269" key="2">
    <source>
    </source>
</evidence>
<reference key="1">
    <citation type="journal article" date="2011" name="PLoS ONE">
        <title>The complete genome sequence of Thermoproteus tenax: a physiologically versatile member of the Crenarchaeota.</title>
        <authorList>
            <person name="Siebers B."/>
            <person name="Zaparty M."/>
            <person name="Raddatz G."/>
            <person name="Tjaden B."/>
            <person name="Albers S.V."/>
            <person name="Bell S.D."/>
            <person name="Blombach F."/>
            <person name="Kletzin A."/>
            <person name="Kyrpides N."/>
            <person name="Lanz C."/>
            <person name="Plagens A."/>
            <person name="Rampp M."/>
            <person name="Rosinus A."/>
            <person name="von Jan M."/>
            <person name="Makarova K.S."/>
            <person name="Klenk H.P."/>
            <person name="Schuster S.C."/>
            <person name="Hensel R."/>
        </authorList>
    </citation>
    <scope>NUCLEOTIDE SEQUENCE [LARGE SCALE GENOMIC DNA]</scope>
    <source>
        <strain>ATCC 35583 / DSM 2078 / JCM 9277 / NBRC 100435 / Kra 1</strain>
    </source>
</reference>
<reference key="2">
    <citation type="journal article" date="2012" name="J. Bacteriol.">
        <title>Characterization of the CRISPR/Cas subtype I-A system of the hyperthermophilic crenarchaeon Thermoproteus tenax.</title>
        <authorList>
            <person name="Plagens A."/>
            <person name="Tjaden B."/>
            <person name="Hagemann A."/>
            <person name="Randau L."/>
            <person name="Hensel R."/>
        </authorList>
    </citation>
    <scope>SUBUNIT</scope>
    <scope>INDUCTION</scope>
    <scope>OPERON STRUCTURE</scope>
    <source>
        <strain>ATCC 35583 / DSM 2078 / JCM 9277 / NBRC 100435 / Kra 1</strain>
    </source>
</reference>
<organism>
    <name type="scientific">Thermoproteus tenax (strain ATCC 35583 / DSM 2078 / JCM 9277 / NBRC 100435 / Kra 1)</name>
    <dbReference type="NCBI Taxonomy" id="768679"/>
    <lineage>
        <taxon>Archaea</taxon>
        <taxon>Thermoproteota</taxon>
        <taxon>Thermoprotei</taxon>
        <taxon>Thermoproteales</taxon>
        <taxon>Thermoproteaceae</taxon>
        <taxon>Thermoproteus</taxon>
    </lineage>
</organism>
<accession>G4RJZ5</accession>
<name>CAS8_THETK</name>
<proteinExistence type="evidence at protein level"/>
<feature type="chain" id="PRO_0000422230" description="CRISPR system associated protein Cas8">
    <location>
        <begin position="1"/>
        <end position="361"/>
    </location>
</feature>
<sequence length="361" mass="40403">MTQCPQEMITPGHGIIADALIMHGLIKILHIEGKMEGWAERRGERFVVCAERPDLNWIDQWEPMELLEIAAEFKAKGKDRASEEEEQRPYFGLVHDLSRSTVDPGNFSSWISDVREALYALKADFDLSEEHKEKRGEGRARSKKRGYYTLYLPLSGVYGKYVVENYGIRQSQYAVCATCFALSTLGYIYGTVKARVERRSSSGGGHDVFNLTFIPRERTSLRSLMALQRMAGLVEMRPGDLNELGAVVYMLSVGETIYAVREGVDILVWVTQRAGNFQRTVGVNIFRGDRLLEAIAEIKYRAPSWPKIARQLGSSLNVLGEYLAFGGDVYHVIRSVMADLGRKGGKLAGLEGLAEALKKIG</sequence>